<name>NHAA_MYCS2</name>
<organism>
    <name type="scientific">Mycolicibacterium smegmatis (strain ATCC 700084 / mc(2)155)</name>
    <name type="common">Mycobacterium smegmatis</name>
    <dbReference type="NCBI Taxonomy" id="246196"/>
    <lineage>
        <taxon>Bacteria</taxon>
        <taxon>Bacillati</taxon>
        <taxon>Actinomycetota</taxon>
        <taxon>Actinomycetes</taxon>
        <taxon>Mycobacteriales</taxon>
        <taxon>Mycobacteriaceae</taxon>
        <taxon>Mycolicibacterium</taxon>
    </lineage>
</organism>
<reference key="1">
    <citation type="submission" date="2006-10" db="EMBL/GenBank/DDBJ databases">
        <authorList>
            <person name="Fleischmann R.D."/>
            <person name="Dodson R.J."/>
            <person name="Haft D.H."/>
            <person name="Merkel J.S."/>
            <person name="Nelson W.C."/>
            <person name="Fraser C.M."/>
        </authorList>
    </citation>
    <scope>NUCLEOTIDE SEQUENCE [LARGE SCALE GENOMIC DNA]</scope>
    <source>
        <strain>ATCC 700084 / mc(2)155</strain>
    </source>
</reference>
<reference key="2">
    <citation type="journal article" date="2007" name="Genome Biol.">
        <title>Interrupted coding sequences in Mycobacterium smegmatis: authentic mutations or sequencing errors?</title>
        <authorList>
            <person name="Deshayes C."/>
            <person name="Perrodou E."/>
            <person name="Gallien S."/>
            <person name="Euphrasie D."/>
            <person name="Schaeffer C."/>
            <person name="Van-Dorsselaer A."/>
            <person name="Poch O."/>
            <person name="Lecompte O."/>
            <person name="Reyrat J.-M."/>
        </authorList>
    </citation>
    <scope>NUCLEOTIDE SEQUENCE [LARGE SCALE GENOMIC DNA]</scope>
    <source>
        <strain>ATCC 700084 / mc(2)155</strain>
    </source>
</reference>
<reference key="3">
    <citation type="journal article" date="2009" name="Genome Res.">
        <title>Ortho-proteogenomics: multiple proteomes investigation through orthology and a new MS-based protocol.</title>
        <authorList>
            <person name="Gallien S."/>
            <person name="Perrodou E."/>
            <person name="Carapito C."/>
            <person name="Deshayes C."/>
            <person name="Reyrat J.-M."/>
            <person name="Van Dorsselaer A."/>
            <person name="Poch O."/>
            <person name="Schaeffer C."/>
            <person name="Lecompte O."/>
        </authorList>
    </citation>
    <scope>NUCLEOTIDE SEQUENCE [LARGE SCALE GENOMIC DNA]</scope>
    <source>
        <strain>ATCC 700084 / mc(2)155</strain>
    </source>
</reference>
<evidence type="ECO:0000255" key="1">
    <source>
        <dbReference type="HAMAP-Rule" id="MF_01844"/>
    </source>
</evidence>
<keyword id="KW-0050">Antiport</keyword>
<keyword id="KW-1003">Cell membrane</keyword>
<keyword id="KW-0406">Ion transport</keyword>
<keyword id="KW-0472">Membrane</keyword>
<keyword id="KW-1185">Reference proteome</keyword>
<keyword id="KW-0915">Sodium</keyword>
<keyword id="KW-0739">Sodium transport</keyword>
<keyword id="KW-0812">Transmembrane</keyword>
<keyword id="KW-1133">Transmembrane helix</keyword>
<keyword id="KW-0813">Transport</keyword>
<comment type="function">
    <text evidence="1">Na(+)/H(+) antiporter that extrudes sodium in exchange for external protons.</text>
</comment>
<comment type="catalytic activity">
    <reaction evidence="1">
        <text>Na(+)(in) + 2 H(+)(out) = Na(+)(out) + 2 H(+)(in)</text>
        <dbReference type="Rhea" id="RHEA:29251"/>
        <dbReference type="ChEBI" id="CHEBI:15378"/>
        <dbReference type="ChEBI" id="CHEBI:29101"/>
    </reaction>
    <physiologicalReaction direction="left-to-right" evidence="1">
        <dbReference type="Rhea" id="RHEA:29252"/>
    </physiologicalReaction>
</comment>
<comment type="subcellular location">
    <subcellularLocation>
        <location evidence="1">Cell membrane</location>
        <topology evidence="1">Multi-pass membrane protein</topology>
    </subcellularLocation>
</comment>
<comment type="similarity">
    <text evidence="1">Belongs to the NhaA Na(+)/H(+) (TC 2.A.33) antiporter family.</text>
</comment>
<gene>
    <name evidence="1" type="primary">nhaA</name>
    <name type="ordered locus">MSMEG_2775</name>
    <name type="ordered locus">MSMEI_2706</name>
</gene>
<protein>
    <recommendedName>
        <fullName evidence="1">Na(+)/H(+) antiporter NhaA</fullName>
    </recommendedName>
    <alternativeName>
        <fullName evidence="1">Sodium/proton antiporter NhaA</fullName>
    </alternativeName>
</protein>
<accession>A0QW18</accession>
<accession>I7G9F3</accession>
<feature type="chain" id="PRO_0000334338" description="Na(+)/H(+) antiporter NhaA">
    <location>
        <begin position="1"/>
        <end position="431"/>
    </location>
</feature>
<feature type="transmembrane region" description="Helical" evidence="1">
    <location>
        <begin position="33"/>
        <end position="53"/>
    </location>
</feature>
<feature type="transmembrane region" description="Helical" evidence="1">
    <location>
        <begin position="74"/>
        <end position="94"/>
    </location>
</feature>
<feature type="transmembrane region" description="Helical" evidence="1">
    <location>
        <begin position="112"/>
        <end position="132"/>
    </location>
</feature>
<feature type="transmembrane region" description="Helical" evidence="1">
    <location>
        <begin position="144"/>
        <end position="164"/>
    </location>
</feature>
<feature type="transmembrane region" description="Helical" evidence="1">
    <location>
        <begin position="173"/>
        <end position="193"/>
    </location>
</feature>
<feature type="transmembrane region" description="Helical" evidence="1">
    <location>
        <begin position="197"/>
        <end position="217"/>
    </location>
</feature>
<feature type="transmembrane region" description="Helical" evidence="1">
    <location>
        <begin position="225"/>
        <end position="245"/>
    </location>
</feature>
<feature type="transmembrane region" description="Helical" evidence="1">
    <location>
        <begin position="279"/>
        <end position="299"/>
    </location>
</feature>
<feature type="transmembrane region" description="Helical" evidence="1">
    <location>
        <begin position="311"/>
        <end position="331"/>
    </location>
</feature>
<feature type="transmembrane region" description="Helical" evidence="1">
    <location>
        <begin position="347"/>
        <end position="367"/>
    </location>
</feature>
<feature type="transmembrane region" description="Helical" evidence="1">
    <location>
        <begin position="379"/>
        <end position="399"/>
    </location>
</feature>
<sequence length="431" mass="45441">MTDQPETFRRRIFSRSSWPEWQRVSELLRTETVGGALLLVAALAALVWANSPWSAGYDQVSDFVVGPHSLHLDLSISAWAADGLLAIFFFVVGVELKREFVVGDLRDPAKAALPIAAAVGGMIVPAVIFVGVNLVAGHTENLGGWAIPVATDIAFALAVLAVIATHLPSALRIFLLTLAVVDDLLAIIVIAVFYTTQLSFGPLAGALVTIAVFGLAVQRGVRTPFLLLPLAVVAWALMHASGVHATVAGVLLGFTIPVLGRHACADRMEHRLRPLSAGFAVPVFAFFAAGVTVGGLSGFASALSHPVTYGVIAGLVLGKPIGVFLTTYVLARFTNASLDEDLAWRDVLGLALLAGIGFTVSLLIGELAFENSPIAHDDAKIAVLTGSVLAGLLAAVVLLSRNAVYRRIHEAETVDADDDGVPDIYQPRQDQ</sequence>
<proteinExistence type="inferred from homology"/>
<dbReference type="EMBL" id="CP000480">
    <property type="protein sequence ID" value="ABK73189.1"/>
    <property type="molecule type" value="Genomic_DNA"/>
</dbReference>
<dbReference type="EMBL" id="CP001663">
    <property type="protein sequence ID" value="AFP39174.1"/>
    <property type="molecule type" value="Genomic_DNA"/>
</dbReference>
<dbReference type="RefSeq" id="WP_011728574.1">
    <property type="nucleotide sequence ID" value="NZ_SIJM01000032.1"/>
</dbReference>
<dbReference type="RefSeq" id="YP_887106.1">
    <property type="nucleotide sequence ID" value="NC_008596.1"/>
</dbReference>
<dbReference type="SMR" id="A0QW18"/>
<dbReference type="STRING" id="246196.MSMEG_2775"/>
<dbReference type="PaxDb" id="246196-MSMEI_2706"/>
<dbReference type="KEGG" id="msb:LJ00_13795"/>
<dbReference type="KEGG" id="msg:MSMEI_2706"/>
<dbReference type="KEGG" id="msm:MSMEG_2775"/>
<dbReference type="PATRIC" id="fig|246196.19.peg.2743"/>
<dbReference type="eggNOG" id="COG3004">
    <property type="taxonomic scope" value="Bacteria"/>
</dbReference>
<dbReference type="OrthoDB" id="9808135at2"/>
<dbReference type="Proteomes" id="UP000000757">
    <property type="component" value="Chromosome"/>
</dbReference>
<dbReference type="Proteomes" id="UP000006158">
    <property type="component" value="Chromosome"/>
</dbReference>
<dbReference type="GO" id="GO:0005886">
    <property type="term" value="C:plasma membrane"/>
    <property type="evidence" value="ECO:0007669"/>
    <property type="project" value="UniProtKB-SubCell"/>
</dbReference>
<dbReference type="GO" id="GO:0015385">
    <property type="term" value="F:sodium:proton antiporter activity"/>
    <property type="evidence" value="ECO:0007669"/>
    <property type="project" value="TreeGrafter"/>
</dbReference>
<dbReference type="GO" id="GO:0006885">
    <property type="term" value="P:regulation of pH"/>
    <property type="evidence" value="ECO:0007669"/>
    <property type="project" value="InterPro"/>
</dbReference>
<dbReference type="Gene3D" id="1.20.1530.10">
    <property type="entry name" value="Na+/H+ antiporter like domain"/>
    <property type="match status" value="1"/>
</dbReference>
<dbReference type="HAMAP" id="MF_01844">
    <property type="entry name" value="NhaA"/>
    <property type="match status" value="1"/>
</dbReference>
<dbReference type="InterPro" id="IPR023171">
    <property type="entry name" value="Na/H_antiporter_dom_sf"/>
</dbReference>
<dbReference type="InterPro" id="IPR004670">
    <property type="entry name" value="NhaA"/>
</dbReference>
<dbReference type="NCBIfam" id="TIGR00773">
    <property type="entry name" value="NhaA"/>
    <property type="match status" value="1"/>
</dbReference>
<dbReference type="PANTHER" id="PTHR30341:SF0">
    <property type="entry name" value="NA(+)_H(+) ANTIPORTER NHAA"/>
    <property type="match status" value="1"/>
</dbReference>
<dbReference type="PANTHER" id="PTHR30341">
    <property type="entry name" value="SODIUM ION/PROTON ANTIPORTER NHAA-RELATED"/>
    <property type="match status" value="1"/>
</dbReference>
<dbReference type="Pfam" id="PF06965">
    <property type="entry name" value="Na_H_antiport_1"/>
    <property type="match status" value="1"/>
</dbReference>